<keyword id="KW-0106">Calcium</keyword>
<keyword id="KW-0903">Direct protein sequencing</keyword>
<keyword id="KW-0348">Hemagglutinin</keyword>
<keyword id="KW-0391">Immunity</keyword>
<keyword id="KW-0399">Innate immunity</keyword>
<keyword id="KW-0430">Lectin</keyword>
<keyword id="KW-0465">Mannose-binding</keyword>
<keyword id="KW-0964">Secreted</keyword>
<sequence>SWANLNTFGR</sequence>
<dbReference type="Proteomes" id="UP001318040">
    <property type="component" value="Unplaced"/>
</dbReference>
<dbReference type="GO" id="GO:0005576">
    <property type="term" value="C:extracellular region"/>
    <property type="evidence" value="ECO:0000314"/>
    <property type="project" value="UniProtKB"/>
</dbReference>
<dbReference type="GO" id="GO:0005537">
    <property type="term" value="F:D-mannose binding"/>
    <property type="evidence" value="ECO:0000314"/>
    <property type="project" value="UniProtKB"/>
</dbReference>
<dbReference type="GO" id="GO:0045087">
    <property type="term" value="P:innate immune response"/>
    <property type="evidence" value="ECO:0000314"/>
    <property type="project" value="UniProtKB"/>
</dbReference>
<dbReference type="GO" id="GO:0034120">
    <property type="term" value="P:positive regulation of erythrocyte aggregation"/>
    <property type="evidence" value="ECO:0000314"/>
    <property type="project" value="UniProtKB"/>
</dbReference>
<accession>P86454</accession>
<organism>
    <name type="scientific">Petromyzon marinus</name>
    <name type="common">Sea lamprey</name>
    <dbReference type="NCBI Taxonomy" id="7757"/>
    <lineage>
        <taxon>Eukaryota</taxon>
        <taxon>Metazoa</taxon>
        <taxon>Chordata</taxon>
        <taxon>Craniata</taxon>
        <taxon>Vertebrata</taxon>
        <taxon>Cyclostomata</taxon>
        <taxon>Hyperoartia</taxon>
        <taxon>Petromyzontiformes</taxon>
        <taxon>Petromyzontidae</taxon>
        <taxon>Petromyzon</taxon>
    </lineage>
</organism>
<comment type="function">
    <text evidence="1 2">Calcium-dependent lectin involved in innate immune defense. Binds mannose residues on the surface of the Gram-negative bacterium A.salmonicida. Shows agglutinating activity towards horse erythrocytes.</text>
</comment>
<comment type="subunit">
    <text evidence="1 2">Forms an oligomeric complex with the C-type lectin 35 kDa subunit.</text>
</comment>
<comment type="subcellular location">
    <subcellularLocation>
        <location evidence="1">Secreted</location>
    </subcellularLocation>
</comment>
<name>CLC65_PETMA</name>
<proteinExistence type="evidence at protein level"/>
<feature type="chain" id="PRO_0000392632" description="C-type lectin 65 kDa subunit">
    <location>
        <begin position="1" status="less than"/>
        <end position="10" status="greater than"/>
    </location>
</feature>
<feature type="non-terminal residue" evidence="4">
    <location>
        <position position="1"/>
    </location>
</feature>
<feature type="non-terminal residue" evidence="4">
    <location>
        <position position="10"/>
    </location>
</feature>
<protein>
    <recommendedName>
        <fullName evidence="3 4">C-type lectin 65 kDa subunit</fullName>
    </recommendedName>
</protein>
<evidence type="ECO:0000269" key="1">
    <source>
    </source>
</evidence>
<evidence type="ECO:0000269" key="2">
    <source>
    </source>
</evidence>
<evidence type="ECO:0000303" key="3">
    <source>
    </source>
</evidence>
<evidence type="ECO:0000303" key="4">
    <source>
    </source>
</evidence>
<evidence type="ECO:0000305" key="5"/>
<reference evidence="5" key="1">
    <citation type="journal article" date="1994" name="Ann. N. Y. Acad. Sci.">
        <title>Recognition molecules and immunoglobulin domains in invertebrates.</title>
        <authorList>
            <person name="Schluter S.F."/>
            <person name="Schroeder J."/>
            <person name="Wang E."/>
            <person name="Marchalonis J.J."/>
        </authorList>
    </citation>
    <scope>PROTEIN SEQUENCE</scope>
    <scope>FUNCTION</scope>
    <scope>SUBUNIT</scope>
    <source>
        <tissue evidence="2">Egg</tissue>
    </source>
</reference>
<reference evidence="5" key="2">
    <citation type="journal article" date="2008" name="Vet. Immunol. Immunopathol.">
        <title>Isolation of mannose-binding C-type lectin from sea lamprey (Petromyzon marinus) plasma and binding to Aeromonas salmonicida.</title>
        <authorList>
            <person name="Ourth D.D."/>
            <person name="Rose W.M."/>
            <person name="Siefkes M.J."/>
        </authorList>
    </citation>
    <scope>FUNCTION</scope>
    <scope>SUBUNIT</scope>
    <scope>SUBCELLULAR LOCATION</scope>
</reference>